<reference key="1">
    <citation type="journal article" date="2006" name="Proc. Natl. Acad. Sci. U.S.A.">
        <title>Molecular genetic anatomy of inter- and intraserotype variation in the human bacterial pathogen group A Streptococcus.</title>
        <authorList>
            <person name="Beres S.B."/>
            <person name="Richter E.W."/>
            <person name="Nagiec M.J."/>
            <person name="Sumby P."/>
            <person name="Porcella S.F."/>
            <person name="DeLeo F.R."/>
            <person name="Musser J.M."/>
        </authorList>
    </citation>
    <scope>NUCLEOTIDE SEQUENCE [LARGE SCALE GENOMIC DNA]</scope>
    <source>
        <strain>MGAS10750</strain>
    </source>
</reference>
<keyword id="KW-1003">Cell membrane</keyword>
<keyword id="KW-0378">Hydrolase</keyword>
<keyword id="KW-0472">Membrane</keyword>
<keyword id="KW-0479">Metal-binding</keyword>
<keyword id="KW-0482">Metalloprotease</keyword>
<keyword id="KW-0645">Protease</keyword>
<keyword id="KW-0812">Transmembrane</keyword>
<keyword id="KW-1133">Transmembrane helix</keyword>
<keyword id="KW-0862">Zinc</keyword>
<protein>
    <recommendedName>
        <fullName evidence="1">Protease HtpX homolog</fullName>
        <ecNumber evidence="1">3.4.24.-</ecNumber>
    </recommendedName>
</protein>
<organism>
    <name type="scientific">Streptococcus pyogenes serotype M4 (strain MGAS10750)</name>
    <dbReference type="NCBI Taxonomy" id="370554"/>
    <lineage>
        <taxon>Bacteria</taxon>
        <taxon>Bacillati</taxon>
        <taxon>Bacillota</taxon>
        <taxon>Bacilli</taxon>
        <taxon>Lactobacillales</taxon>
        <taxon>Streptococcaceae</taxon>
        <taxon>Streptococcus</taxon>
    </lineage>
</organism>
<dbReference type="EC" id="3.4.24.-" evidence="1"/>
<dbReference type="EMBL" id="CP000262">
    <property type="protein sequence ID" value="ABF37225.1"/>
    <property type="molecule type" value="Genomic_DNA"/>
</dbReference>
<dbReference type="SMR" id="Q1J8D6"/>
<dbReference type="KEGG" id="spi:MGAS10750_Spy0275"/>
<dbReference type="HOGENOM" id="CLU_042266_2_1_9"/>
<dbReference type="Proteomes" id="UP000002434">
    <property type="component" value="Chromosome"/>
</dbReference>
<dbReference type="GO" id="GO:0005886">
    <property type="term" value="C:plasma membrane"/>
    <property type="evidence" value="ECO:0007669"/>
    <property type="project" value="UniProtKB-SubCell"/>
</dbReference>
<dbReference type="GO" id="GO:0004222">
    <property type="term" value="F:metalloendopeptidase activity"/>
    <property type="evidence" value="ECO:0007669"/>
    <property type="project" value="UniProtKB-UniRule"/>
</dbReference>
<dbReference type="GO" id="GO:0008270">
    <property type="term" value="F:zinc ion binding"/>
    <property type="evidence" value="ECO:0007669"/>
    <property type="project" value="UniProtKB-UniRule"/>
</dbReference>
<dbReference type="GO" id="GO:0006508">
    <property type="term" value="P:proteolysis"/>
    <property type="evidence" value="ECO:0007669"/>
    <property type="project" value="UniProtKB-KW"/>
</dbReference>
<dbReference type="CDD" id="cd07340">
    <property type="entry name" value="M48B_Htpx_like"/>
    <property type="match status" value="1"/>
</dbReference>
<dbReference type="Gene3D" id="3.30.2010.10">
    <property type="entry name" value="Metalloproteases ('zincins'), catalytic domain"/>
    <property type="match status" value="1"/>
</dbReference>
<dbReference type="HAMAP" id="MF_00188">
    <property type="entry name" value="Pept_M48_protease_HtpX"/>
    <property type="match status" value="1"/>
</dbReference>
<dbReference type="InterPro" id="IPR050083">
    <property type="entry name" value="HtpX_protease"/>
</dbReference>
<dbReference type="InterPro" id="IPR022919">
    <property type="entry name" value="Pept_M48_protease_HtpX"/>
</dbReference>
<dbReference type="InterPro" id="IPR001915">
    <property type="entry name" value="Peptidase_M48"/>
</dbReference>
<dbReference type="NCBIfam" id="NF003425">
    <property type="entry name" value="PRK04897.1"/>
    <property type="match status" value="1"/>
</dbReference>
<dbReference type="PANTHER" id="PTHR43221">
    <property type="entry name" value="PROTEASE HTPX"/>
    <property type="match status" value="1"/>
</dbReference>
<dbReference type="PANTHER" id="PTHR43221:SF1">
    <property type="entry name" value="PROTEASE HTPX"/>
    <property type="match status" value="1"/>
</dbReference>
<dbReference type="Pfam" id="PF01435">
    <property type="entry name" value="Peptidase_M48"/>
    <property type="match status" value="1"/>
</dbReference>
<accession>Q1J8D6</accession>
<comment type="cofactor">
    <cofactor evidence="1">
        <name>Zn(2+)</name>
        <dbReference type="ChEBI" id="CHEBI:29105"/>
    </cofactor>
    <text evidence="1">Binds 1 zinc ion per subunit.</text>
</comment>
<comment type="subcellular location">
    <subcellularLocation>
        <location evidence="1">Cell membrane</location>
        <topology evidence="1">Multi-pass membrane protein</topology>
    </subcellularLocation>
</comment>
<comment type="similarity">
    <text evidence="1">Belongs to the peptidase M48B family.</text>
</comment>
<feature type="chain" id="PRO_1000020953" description="Protease HtpX homolog">
    <location>
        <begin position="1"/>
        <end position="298"/>
    </location>
</feature>
<feature type="transmembrane region" description="Helical" evidence="1">
    <location>
        <begin position="14"/>
        <end position="34"/>
    </location>
</feature>
<feature type="transmembrane region" description="Helical" evidence="1">
    <location>
        <begin position="39"/>
        <end position="59"/>
    </location>
</feature>
<feature type="transmembrane region" description="Helical" evidence="1">
    <location>
        <begin position="158"/>
        <end position="178"/>
    </location>
</feature>
<feature type="transmembrane region" description="Helical" evidence="1">
    <location>
        <begin position="197"/>
        <end position="217"/>
    </location>
</feature>
<feature type="active site" evidence="1">
    <location>
        <position position="144"/>
    </location>
</feature>
<feature type="binding site" evidence="1">
    <location>
        <position position="143"/>
    </location>
    <ligand>
        <name>Zn(2+)</name>
        <dbReference type="ChEBI" id="CHEBI:29105"/>
        <note>catalytic</note>
    </ligand>
</feature>
<feature type="binding site" evidence="1">
    <location>
        <position position="147"/>
    </location>
    <ligand>
        <name>Zn(2+)</name>
        <dbReference type="ChEBI" id="CHEBI:29105"/>
        <note>catalytic</note>
    </ligand>
</feature>
<feature type="binding site" evidence="1">
    <location>
        <position position="226"/>
    </location>
    <ligand>
        <name>Zn(2+)</name>
        <dbReference type="ChEBI" id="CHEBI:29105"/>
        <note>catalytic</note>
    </ligand>
</feature>
<sequence length="298" mass="32757">MLYQQISQNKQRTVVLLVVFFALLALIGASAGYLLLDNYAMGLVLALVIGVIYATSMIFQSTSLVMSMNNAREVTEKEAPGFFHIVEDMAMVAQIPMPRVFIIEDPSLNAFATGSSPQNAAVAATTGLLEVMNREELEGVIGHEISHIRNYDIRISTIAVALASAVTVISSIGGRMLWYGGGSRRQRDDGDDDVLRIITLLLSLLSLLLAPLVASLIQLAISRQREYLADASSVELTRNPQGMIKALEKLQLSQPMKHPVDDASAALYINEPRKKRSFSSLFSTHPPIEERIERLKNM</sequence>
<gene>
    <name evidence="1" type="primary">htpX</name>
    <name type="ordered locus">MGAS10750_Spy0275</name>
</gene>
<proteinExistence type="inferred from homology"/>
<evidence type="ECO:0000255" key="1">
    <source>
        <dbReference type="HAMAP-Rule" id="MF_00188"/>
    </source>
</evidence>
<name>HTPX_STRPF</name>